<proteinExistence type="inferred from homology"/>
<name>LIPA_NOVAD</name>
<sequence>MTNPAETARPERQRKPDWIRVKAPTSKGYGETRALMRELGLNTVCEEAACPNIGECWTKKHATVMILGDVCTRACAFCNVKTGMPRAVDPMEPINVATAAAKMGLEHIVITSVDRDDLPDGGAGHFVKVIKALRELTPNTTIEILTPDFRNKMEAAVESIVEAGPDVYNHNLETVPRLYPTIRPGARYYASLRLLEQVKRHDPRIFTKSGVMLGLGEERLEVHQVMDDMRSAQIDFLTMGQYLQPTPKHAKVIEFVTPKAFDAYGSIARAKGFLQVAASPLTRSSYHAGEDFRQMRQAREAQLAKAAQKA</sequence>
<keyword id="KW-0004">4Fe-4S</keyword>
<keyword id="KW-0963">Cytoplasm</keyword>
<keyword id="KW-0408">Iron</keyword>
<keyword id="KW-0411">Iron-sulfur</keyword>
<keyword id="KW-0479">Metal-binding</keyword>
<keyword id="KW-1185">Reference proteome</keyword>
<keyword id="KW-0949">S-adenosyl-L-methionine</keyword>
<keyword id="KW-0808">Transferase</keyword>
<gene>
    <name evidence="1" type="primary">lipA</name>
    <name type="ordered locus">Saro_1921</name>
</gene>
<reference key="1">
    <citation type="submission" date="2006-01" db="EMBL/GenBank/DDBJ databases">
        <title>Complete sequence of Novosphingobium aromaticivorans DSM 12444.</title>
        <authorList>
            <consortium name="US DOE Joint Genome Institute"/>
            <person name="Copeland A."/>
            <person name="Lucas S."/>
            <person name="Lapidus A."/>
            <person name="Barry K."/>
            <person name="Detter J.C."/>
            <person name="Glavina T."/>
            <person name="Hammon N."/>
            <person name="Israni S."/>
            <person name="Pitluck S."/>
            <person name="Chain P."/>
            <person name="Malfatti S."/>
            <person name="Shin M."/>
            <person name="Vergez L."/>
            <person name="Schmutz J."/>
            <person name="Larimer F."/>
            <person name="Land M."/>
            <person name="Kyrpides N."/>
            <person name="Ivanova N."/>
            <person name="Fredrickson J."/>
            <person name="Balkwill D."/>
            <person name="Romine M.F."/>
            <person name="Richardson P."/>
        </authorList>
    </citation>
    <scope>NUCLEOTIDE SEQUENCE [LARGE SCALE GENOMIC DNA]</scope>
    <source>
        <strain>ATCC 700278 / DSM 12444 / CCUG 56034 / CIP 105152 / NBRC 16084 / F199</strain>
    </source>
</reference>
<feature type="chain" id="PRO_0000325281" description="Lipoyl synthase">
    <location>
        <begin position="1"/>
        <end position="310"/>
    </location>
</feature>
<feature type="domain" description="Radical SAM core" evidence="2">
    <location>
        <begin position="57"/>
        <end position="274"/>
    </location>
</feature>
<feature type="binding site" evidence="1">
    <location>
        <position position="45"/>
    </location>
    <ligand>
        <name>[4Fe-4S] cluster</name>
        <dbReference type="ChEBI" id="CHEBI:49883"/>
        <label>1</label>
    </ligand>
</feature>
<feature type="binding site" evidence="1">
    <location>
        <position position="50"/>
    </location>
    <ligand>
        <name>[4Fe-4S] cluster</name>
        <dbReference type="ChEBI" id="CHEBI:49883"/>
        <label>1</label>
    </ligand>
</feature>
<feature type="binding site" evidence="1">
    <location>
        <position position="56"/>
    </location>
    <ligand>
        <name>[4Fe-4S] cluster</name>
        <dbReference type="ChEBI" id="CHEBI:49883"/>
        <label>1</label>
    </ligand>
</feature>
<feature type="binding site" evidence="1">
    <location>
        <position position="71"/>
    </location>
    <ligand>
        <name>[4Fe-4S] cluster</name>
        <dbReference type="ChEBI" id="CHEBI:49883"/>
        <label>2</label>
        <note>4Fe-4S-S-AdoMet</note>
    </ligand>
</feature>
<feature type="binding site" evidence="1">
    <location>
        <position position="75"/>
    </location>
    <ligand>
        <name>[4Fe-4S] cluster</name>
        <dbReference type="ChEBI" id="CHEBI:49883"/>
        <label>2</label>
        <note>4Fe-4S-S-AdoMet</note>
    </ligand>
</feature>
<feature type="binding site" evidence="1">
    <location>
        <position position="78"/>
    </location>
    <ligand>
        <name>[4Fe-4S] cluster</name>
        <dbReference type="ChEBI" id="CHEBI:49883"/>
        <label>2</label>
        <note>4Fe-4S-S-AdoMet</note>
    </ligand>
</feature>
<feature type="binding site" evidence="1">
    <location>
        <position position="285"/>
    </location>
    <ligand>
        <name>[4Fe-4S] cluster</name>
        <dbReference type="ChEBI" id="CHEBI:49883"/>
        <label>1</label>
    </ligand>
</feature>
<accession>Q2G712</accession>
<evidence type="ECO:0000255" key="1">
    <source>
        <dbReference type="HAMAP-Rule" id="MF_00206"/>
    </source>
</evidence>
<evidence type="ECO:0000255" key="2">
    <source>
        <dbReference type="PROSITE-ProRule" id="PRU01266"/>
    </source>
</evidence>
<protein>
    <recommendedName>
        <fullName evidence="1">Lipoyl synthase</fullName>
        <ecNumber evidence="1">2.8.1.8</ecNumber>
    </recommendedName>
    <alternativeName>
        <fullName evidence="1">Lip-syn</fullName>
        <shortName evidence="1">LS</shortName>
    </alternativeName>
    <alternativeName>
        <fullName evidence="1">Lipoate synthase</fullName>
    </alternativeName>
    <alternativeName>
        <fullName evidence="1">Lipoic acid synthase</fullName>
    </alternativeName>
    <alternativeName>
        <fullName evidence="1">Sulfur insertion protein LipA</fullName>
    </alternativeName>
</protein>
<organism>
    <name type="scientific">Novosphingobium aromaticivorans (strain ATCC 700278 / DSM 12444 / CCUG 56034 / CIP 105152 / NBRC 16084 / F199)</name>
    <dbReference type="NCBI Taxonomy" id="279238"/>
    <lineage>
        <taxon>Bacteria</taxon>
        <taxon>Pseudomonadati</taxon>
        <taxon>Pseudomonadota</taxon>
        <taxon>Alphaproteobacteria</taxon>
        <taxon>Sphingomonadales</taxon>
        <taxon>Sphingomonadaceae</taxon>
        <taxon>Novosphingobium</taxon>
    </lineage>
</organism>
<dbReference type="EC" id="2.8.1.8" evidence="1"/>
<dbReference type="EMBL" id="CP000248">
    <property type="protein sequence ID" value="ABD26361.1"/>
    <property type="molecule type" value="Genomic_DNA"/>
</dbReference>
<dbReference type="RefSeq" id="WP_011445571.1">
    <property type="nucleotide sequence ID" value="NC_007794.1"/>
</dbReference>
<dbReference type="SMR" id="Q2G712"/>
<dbReference type="STRING" id="279238.Saro_1921"/>
<dbReference type="KEGG" id="nar:Saro_1921"/>
<dbReference type="eggNOG" id="COG0320">
    <property type="taxonomic scope" value="Bacteria"/>
</dbReference>
<dbReference type="HOGENOM" id="CLU_033144_2_1_5"/>
<dbReference type="UniPathway" id="UPA00538">
    <property type="reaction ID" value="UER00593"/>
</dbReference>
<dbReference type="Proteomes" id="UP000009134">
    <property type="component" value="Chromosome"/>
</dbReference>
<dbReference type="GO" id="GO:0005737">
    <property type="term" value="C:cytoplasm"/>
    <property type="evidence" value="ECO:0007669"/>
    <property type="project" value="UniProtKB-SubCell"/>
</dbReference>
<dbReference type="GO" id="GO:0051539">
    <property type="term" value="F:4 iron, 4 sulfur cluster binding"/>
    <property type="evidence" value="ECO:0007669"/>
    <property type="project" value="UniProtKB-UniRule"/>
</dbReference>
<dbReference type="GO" id="GO:0016992">
    <property type="term" value="F:lipoate synthase activity"/>
    <property type="evidence" value="ECO:0007669"/>
    <property type="project" value="UniProtKB-UniRule"/>
</dbReference>
<dbReference type="GO" id="GO:0046872">
    <property type="term" value="F:metal ion binding"/>
    <property type="evidence" value="ECO:0007669"/>
    <property type="project" value="UniProtKB-KW"/>
</dbReference>
<dbReference type="CDD" id="cd01335">
    <property type="entry name" value="Radical_SAM"/>
    <property type="match status" value="1"/>
</dbReference>
<dbReference type="FunFam" id="3.20.20.70:FF:000040">
    <property type="entry name" value="Lipoyl synthase"/>
    <property type="match status" value="1"/>
</dbReference>
<dbReference type="Gene3D" id="3.20.20.70">
    <property type="entry name" value="Aldolase class I"/>
    <property type="match status" value="1"/>
</dbReference>
<dbReference type="HAMAP" id="MF_00206">
    <property type="entry name" value="Lipoyl_synth"/>
    <property type="match status" value="1"/>
</dbReference>
<dbReference type="InterPro" id="IPR013785">
    <property type="entry name" value="Aldolase_TIM"/>
</dbReference>
<dbReference type="InterPro" id="IPR006638">
    <property type="entry name" value="Elp3/MiaA/NifB-like_rSAM"/>
</dbReference>
<dbReference type="InterPro" id="IPR031691">
    <property type="entry name" value="LIAS_N"/>
</dbReference>
<dbReference type="InterPro" id="IPR003698">
    <property type="entry name" value="Lipoyl_synth"/>
</dbReference>
<dbReference type="InterPro" id="IPR007197">
    <property type="entry name" value="rSAM"/>
</dbReference>
<dbReference type="NCBIfam" id="TIGR00510">
    <property type="entry name" value="lipA"/>
    <property type="match status" value="1"/>
</dbReference>
<dbReference type="NCBIfam" id="NF004019">
    <property type="entry name" value="PRK05481.1"/>
    <property type="match status" value="1"/>
</dbReference>
<dbReference type="NCBIfam" id="NF009544">
    <property type="entry name" value="PRK12928.1"/>
    <property type="match status" value="1"/>
</dbReference>
<dbReference type="PANTHER" id="PTHR10949">
    <property type="entry name" value="LIPOYL SYNTHASE"/>
    <property type="match status" value="1"/>
</dbReference>
<dbReference type="PANTHER" id="PTHR10949:SF0">
    <property type="entry name" value="LIPOYL SYNTHASE, MITOCHONDRIAL"/>
    <property type="match status" value="1"/>
</dbReference>
<dbReference type="Pfam" id="PF16881">
    <property type="entry name" value="LIAS_N"/>
    <property type="match status" value="1"/>
</dbReference>
<dbReference type="Pfam" id="PF04055">
    <property type="entry name" value="Radical_SAM"/>
    <property type="match status" value="1"/>
</dbReference>
<dbReference type="PIRSF" id="PIRSF005963">
    <property type="entry name" value="Lipoyl_synth"/>
    <property type="match status" value="1"/>
</dbReference>
<dbReference type="SFLD" id="SFLDF00271">
    <property type="entry name" value="lipoyl_synthase"/>
    <property type="match status" value="1"/>
</dbReference>
<dbReference type="SFLD" id="SFLDS00029">
    <property type="entry name" value="Radical_SAM"/>
    <property type="match status" value="1"/>
</dbReference>
<dbReference type="SMART" id="SM00729">
    <property type="entry name" value="Elp3"/>
    <property type="match status" value="1"/>
</dbReference>
<dbReference type="SUPFAM" id="SSF102114">
    <property type="entry name" value="Radical SAM enzymes"/>
    <property type="match status" value="1"/>
</dbReference>
<dbReference type="PROSITE" id="PS51918">
    <property type="entry name" value="RADICAL_SAM"/>
    <property type="match status" value="1"/>
</dbReference>
<comment type="function">
    <text evidence="1">Catalyzes the radical-mediated insertion of two sulfur atoms into the C-6 and C-8 positions of the octanoyl moiety bound to the lipoyl domains of lipoate-dependent enzymes, thereby converting the octanoylated domains into lipoylated derivatives.</text>
</comment>
<comment type="catalytic activity">
    <reaction evidence="1">
        <text>[[Fe-S] cluster scaffold protein carrying a second [4Fe-4S](2+) cluster] + N(6)-octanoyl-L-lysyl-[protein] + 2 oxidized [2Fe-2S]-[ferredoxin] + 2 S-adenosyl-L-methionine + 4 H(+) = [[Fe-S] cluster scaffold protein] + N(6)-[(R)-dihydrolipoyl]-L-lysyl-[protein] + 4 Fe(3+) + 2 hydrogen sulfide + 2 5'-deoxyadenosine + 2 L-methionine + 2 reduced [2Fe-2S]-[ferredoxin]</text>
        <dbReference type="Rhea" id="RHEA:16585"/>
        <dbReference type="Rhea" id="RHEA-COMP:9928"/>
        <dbReference type="Rhea" id="RHEA-COMP:10000"/>
        <dbReference type="Rhea" id="RHEA-COMP:10001"/>
        <dbReference type="Rhea" id="RHEA-COMP:10475"/>
        <dbReference type="Rhea" id="RHEA-COMP:14568"/>
        <dbReference type="Rhea" id="RHEA-COMP:14569"/>
        <dbReference type="ChEBI" id="CHEBI:15378"/>
        <dbReference type="ChEBI" id="CHEBI:17319"/>
        <dbReference type="ChEBI" id="CHEBI:29034"/>
        <dbReference type="ChEBI" id="CHEBI:29919"/>
        <dbReference type="ChEBI" id="CHEBI:33722"/>
        <dbReference type="ChEBI" id="CHEBI:33737"/>
        <dbReference type="ChEBI" id="CHEBI:33738"/>
        <dbReference type="ChEBI" id="CHEBI:57844"/>
        <dbReference type="ChEBI" id="CHEBI:59789"/>
        <dbReference type="ChEBI" id="CHEBI:78809"/>
        <dbReference type="ChEBI" id="CHEBI:83100"/>
        <dbReference type="EC" id="2.8.1.8"/>
    </reaction>
</comment>
<comment type="cofactor">
    <cofactor evidence="1">
        <name>[4Fe-4S] cluster</name>
        <dbReference type="ChEBI" id="CHEBI:49883"/>
    </cofactor>
    <text evidence="1">Binds 2 [4Fe-4S] clusters per subunit. One cluster is coordinated with 3 cysteines and an exchangeable S-adenosyl-L-methionine.</text>
</comment>
<comment type="pathway">
    <text evidence="1">Protein modification; protein lipoylation via endogenous pathway; protein N(6)-(lipoyl)lysine from octanoyl-[acyl-carrier-protein]: step 2/2.</text>
</comment>
<comment type="subcellular location">
    <subcellularLocation>
        <location evidence="1">Cytoplasm</location>
    </subcellularLocation>
</comment>
<comment type="similarity">
    <text evidence="1">Belongs to the radical SAM superfamily. Lipoyl synthase family.</text>
</comment>